<reference key="1">
    <citation type="journal article" date="2004" name="Proc. Natl. Acad. Sci. U.S.A.">
        <title>Insights into the evolution of Yersinia pestis through whole-genome comparison with Yersinia pseudotuberculosis.</title>
        <authorList>
            <person name="Chain P.S.G."/>
            <person name="Carniel E."/>
            <person name="Larimer F.W."/>
            <person name="Lamerdin J."/>
            <person name="Stoutland P.O."/>
            <person name="Regala W.M."/>
            <person name="Georgescu A.M."/>
            <person name="Vergez L.M."/>
            <person name="Land M.L."/>
            <person name="Motin V.L."/>
            <person name="Brubaker R.R."/>
            <person name="Fowler J."/>
            <person name="Hinnebusch J."/>
            <person name="Marceau M."/>
            <person name="Medigue C."/>
            <person name="Simonet M."/>
            <person name="Chenal-Francisque V."/>
            <person name="Souza B."/>
            <person name="Dacheux D."/>
            <person name="Elliott J.M."/>
            <person name="Derbise A."/>
            <person name="Hauser L.J."/>
            <person name="Garcia E."/>
        </authorList>
    </citation>
    <scope>NUCLEOTIDE SEQUENCE [LARGE SCALE GENOMIC DNA]</scope>
    <source>
        <strain>IP32953</strain>
    </source>
</reference>
<organism>
    <name type="scientific">Yersinia pseudotuberculosis serotype I (strain IP32953)</name>
    <dbReference type="NCBI Taxonomy" id="273123"/>
    <lineage>
        <taxon>Bacteria</taxon>
        <taxon>Pseudomonadati</taxon>
        <taxon>Pseudomonadota</taxon>
        <taxon>Gammaproteobacteria</taxon>
        <taxon>Enterobacterales</taxon>
        <taxon>Yersiniaceae</taxon>
        <taxon>Yersinia</taxon>
    </lineage>
</organism>
<sequence>MKNWIVGMVALVTMVPVMAATPWQKITHPVAGSPQSIGGFANGCVIGAQPLPLESADYQVMRSDQRRYFGHPDLLNFIHRLSAQAHQQQLGTVLIGDMAMPAGGRFSSGHASHQSGLDVDIWLQLPKQRWSQQQLLKPQPIDLVAVDGKRVIPALWQPQIESLIKLAAKDNDVTRIFVNPAIKKQLCLDAGADRQWLHKVRPWFAHRAHMHVRLRCPANSLECVDQDTPPPGDGCGAELESWFQPPPPSAKPGKTLPPPLPPSCQALLDNHFATE</sequence>
<accession>Q668V6</accession>
<comment type="function">
    <text evidence="1">Murein endopeptidase that cleaves the D-alanyl-meso-2,6-diamino-pimelyl amide bond that connects peptidoglycan strands. Likely plays a role in the removal of murein from the sacculus.</text>
</comment>
<comment type="cofactor">
    <cofactor evidence="1">
        <name>Zn(2+)</name>
        <dbReference type="ChEBI" id="CHEBI:29105"/>
    </cofactor>
    <text evidence="1">Binds 2 Zn(2+) ions per subunit. Zn(2+) ion 1 is bound in the active site. Zn(2+) ion 2 is bound at the dimer interface by residues from both subunits.</text>
</comment>
<comment type="subunit">
    <text evidence="1">Dimer.</text>
</comment>
<comment type="subcellular location">
    <subcellularLocation>
        <location evidence="1">Periplasm</location>
    </subcellularLocation>
</comment>
<comment type="similarity">
    <text evidence="1">Belongs to the peptidase M74 family.</text>
</comment>
<comment type="sequence caution" evidence="3">
    <conflict type="erroneous initiation">
        <sequence resource="EMBL-CDS" id="CAH21869"/>
    </conflict>
</comment>
<dbReference type="EC" id="3.4.24.-" evidence="1"/>
<dbReference type="EMBL" id="BX936398">
    <property type="protein sequence ID" value="CAH21869.1"/>
    <property type="status" value="ALT_INIT"/>
    <property type="molecule type" value="Genomic_DNA"/>
</dbReference>
<dbReference type="RefSeq" id="WP_002225365.1">
    <property type="nucleotide sequence ID" value="NZ_CP009712.1"/>
</dbReference>
<dbReference type="SMR" id="Q668V6"/>
<dbReference type="MEROPS" id="M74.001"/>
<dbReference type="GeneID" id="49785366"/>
<dbReference type="KEGG" id="yps:YPTB2631"/>
<dbReference type="Proteomes" id="UP000001011">
    <property type="component" value="Chromosome"/>
</dbReference>
<dbReference type="GO" id="GO:0030288">
    <property type="term" value="C:outer membrane-bounded periplasmic space"/>
    <property type="evidence" value="ECO:0007669"/>
    <property type="project" value="InterPro"/>
</dbReference>
<dbReference type="GO" id="GO:0046872">
    <property type="term" value="F:metal ion binding"/>
    <property type="evidence" value="ECO:0007669"/>
    <property type="project" value="UniProtKB-KW"/>
</dbReference>
<dbReference type="GO" id="GO:0004222">
    <property type="term" value="F:metalloendopeptidase activity"/>
    <property type="evidence" value="ECO:0007669"/>
    <property type="project" value="UniProtKB-UniRule"/>
</dbReference>
<dbReference type="GO" id="GO:0004252">
    <property type="term" value="F:serine-type endopeptidase activity"/>
    <property type="evidence" value="ECO:0007669"/>
    <property type="project" value="InterPro"/>
</dbReference>
<dbReference type="GO" id="GO:0000270">
    <property type="term" value="P:peptidoglycan metabolic process"/>
    <property type="evidence" value="ECO:0007669"/>
    <property type="project" value="UniProtKB-UniRule"/>
</dbReference>
<dbReference type="GO" id="GO:0006508">
    <property type="term" value="P:proteolysis"/>
    <property type="evidence" value="ECO:0007669"/>
    <property type="project" value="UniProtKB-KW"/>
</dbReference>
<dbReference type="Gene3D" id="3.30.1380.10">
    <property type="match status" value="1"/>
</dbReference>
<dbReference type="HAMAP" id="MF_01623">
    <property type="entry name" value="MepA"/>
    <property type="match status" value="1"/>
</dbReference>
<dbReference type="InterPro" id="IPR009045">
    <property type="entry name" value="Hedgehog_sig/DD-Pept_Zn-bd_sf"/>
</dbReference>
<dbReference type="InterPro" id="IPR005073">
    <property type="entry name" value="Peptidase_M74"/>
</dbReference>
<dbReference type="NCBIfam" id="NF006947">
    <property type="entry name" value="PRK09429.1"/>
    <property type="match status" value="1"/>
</dbReference>
<dbReference type="Pfam" id="PF03411">
    <property type="entry name" value="Peptidase_M74"/>
    <property type="match status" value="1"/>
</dbReference>
<dbReference type="PIRSF" id="PIRSF018455">
    <property type="entry name" value="MepA"/>
    <property type="match status" value="1"/>
</dbReference>
<dbReference type="SUPFAM" id="SSF55166">
    <property type="entry name" value="Hedgehog/DD-peptidase"/>
    <property type="match status" value="1"/>
</dbReference>
<proteinExistence type="inferred from homology"/>
<keyword id="KW-1015">Disulfide bond</keyword>
<keyword id="KW-0378">Hydrolase</keyword>
<keyword id="KW-0479">Metal-binding</keyword>
<keyword id="KW-0482">Metalloprotease</keyword>
<keyword id="KW-0574">Periplasm</keyword>
<keyword id="KW-0645">Protease</keyword>
<keyword id="KW-0732">Signal</keyword>
<keyword id="KW-0862">Zinc</keyword>
<name>MEPA_YERPS</name>
<gene>
    <name evidence="1" type="primary">mepA</name>
    <name type="ordered locus">YPTB2631</name>
</gene>
<evidence type="ECO:0000255" key="1">
    <source>
        <dbReference type="HAMAP-Rule" id="MF_01623"/>
    </source>
</evidence>
<evidence type="ECO:0000256" key="2">
    <source>
        <dbReference type="SAM" id="MobiDB-lite"/>
    </source>
</evidence>
<evidence type="ECO:0000305" key="3"/>
<protein>
    <recommendedName>
        <fullName evidence="1">Penicillin-insensitive murein endopeptidase</fullName>
        <ecNumber evidence="1">3.4.24.-</ecNumber>
    </recommendedName>
    <alternativeName>
        <fullName evidence="1">D-alanyl-D-alanine-endopeptidase</fullName>
        <shortName evidence="1">DD-endopeptidase</shortName>
    </alternativeName>
</protein>
<feature type="signal peptide" evidence="1">
    <location>
        <begin position="1"/>
        <end position="19"/>
    </location>
</feature>
<feature type="chain" id="PRO_0000044585" description="Penicillin-insensitive murein endopeptidase">
    <location>
        <begin position="20"/>
        <end position="275"/>
    </location>
</feature>
<feature type="region of interest" description="Disordered" evidence="2">
    <location>
        <begin position="227"/>
        <end position="262"/>
    </location>
</feature>
<feature type="compositionally biased region" description="Pro residues" evidence="2">
    <location>
        <begin position="244"/>
        <end position="262"/>
    </location>
</feature>
<feature type="binding site" evidence="1">
    <location>
        <position position="110"/>
    </location>
    <ligand>
        <name>Zn(2+)</name>
        <dbReference type="ChEBI" id="CHEBI:29105"/>
        <label>1</label>
    </ligand>
</feature>
<feature type="binding site" evidence="1">
    <location>
        <position position="113"/>
    </location>
    <ligand>
        <name>Zn(2+)</name>
        <dbReference type="ChEBI" id="CHEBI:29105"/>
        <label>1</label>
    </ligand>
</feature>
<feature type="binding site" evidence="1">
    <location>
        <position position="120"/>
    </location>
    <ligand>
        <name>Zn(2+)</name>
        <dbReference type="ChEBI" id="CHEBI:29105"/>
        <label>1</label>
    </ligand>
</feature>
<feature type="binding site" evidence="1">
    <location>
        <position position="147"/>
    </location>
    <ligand>
        <name>Zn(2+)</name>
        <dbReference type="ChEBI" id="CHEBI:29105"/>
        <label>2</label>
    </ligand>
</feature>
<feature type="binding site" evidence="1">
    <location>
        <position position="211"/>
    </location>
    <ligand>
        <name>Zn(2+)</name>
        <dbReference type="ChEBI" id="CHEBI:29105"/>
        <label>1</label>
    </ligand>
</feature>
<feature type="disulfide bond" evidence="1">
    <location>
        <begin position="44"/>
        <end position="264"/>
    </location>
</feature>
<feature type="disulfide bond" evidence="1">
    <location>
        <begin position="187"/>
        <end position="235"/>
    </location>
</feature>
<feature type="disulfide bond" evidence="1">
    <location>
        <begin position="216"/>
        <end position="223"/>
    </location>
</feature>